<proteinExistence type="evidence at transcript level"/>
<sequence length="393" mass="44421">MEQCACVERELDKVLHKFLTYGQHCEQSLEELLHSVGQLRAELASAALQGTPLSATLSLVMSQCCRKIRDTVQKLASDHKDIHSSVSRVGKAIDRNFDSEICGVVSDAVWDSREKQQQILQMAIVEHLYQQGMLSVAEELCQESTLNVDLDFKQPFLELNRILEALHEQDLGPALEWAVSHRQRLLELNSSLEFKLHRLHFIRLLAGGPEKQLEALSYARHFQPFARLHQREIQVMMGSLVYLRLGLEKSPYCHLLDNSHWAEICETFTRDACSLLGLSVESPLSVSFASGCVALPVLMNIKAVIEQRQCTGVWSHKDELPIEIELGMKCWYHSVFACPILRQQTSDSNPPIKLICGHVISRDALNKLINGGKLKCPYCPMEQNPADGKRIIF</sequence>
<comment type="function">
    <text evidence="1">Core component of the CTLH E3 ubiquitin-protein ligase complex that selectively accepts ubiquitin from UBE2H and mediates ubiquitination and subsequent proteasomal degradation of the transcription factor HBP1. MAEA and RMND5A are both required for catalytic activity of the CTLH E3 ubiquitin-protein ligase complex. Catalytic activity of the complex is required for normal cell proliferation. The CTLH E3 ubiquitin-protein ligase complex is not required for the degradation of enzymes involved in gluconeogenesis, such as FBP1.</text>
</comment>
<comment type="catalytic activity">
    <reaction evidence="1">
        <text>S-ubiquitinyl-[E2 ubiquitin-conjugating enzyme]-L-cysteine + [acceptor protein]-L-lysine = [E2 ubiquitin-conjugating enzyme]-L-cysteine + N(6)-ubiquitinyl-[acceptor protein]-L-lysine.</text>
        <dbReference type="EC" id="2.3.2.27"/>
    </reaction>
</comment>
<comment type="subunit">
    <text evidence="1">Identified in the CTLH complex that contains GID4, RANBP9 and/or RANBP10, MKLN1, MAEA, RMND5A (or alternatively its paralog RMND5B), GID8, ARMC8, WDR26 and YPEL5. Within this complex, MAEA, RMND5A (or alternatively its paralog RMND5B), GID8, WDR26, and RANBP9 and/or RANBP10 form the catalytic core, while GID4, MKLN1, ARMC8 and YPEL5 have ancillary roles.</text>
</comment>
<comment type="subcellular location">
    <subcellularLocation>
        <location evidence="1">Cytoplasm</location>
        <location evidence="1">Cytosol</location>
    </subcellularLocation>
</comment>
<keyword id="KW-0007">Acetylation</keyword>
<keyword id="KW-0963">Cytoplasm</keyword>
<keyword id="KW-0479">Metal-binding</keyword>
<keyword id="KW-1185">Reference proteome</keyword>
<keyword id="KW-0808">Transferase</keyword>
<keyword id="KW-0833">Ubl conjugation pathway</keyword>
<keyword id="KW-0862">Zinc</keyword>
<keyword id="KW-0863">Zinc-finger</keyword>
<evidence type="ECO:0000250" key="1">
    <source>
        <dbReference type="UniProtKB" id="Q96G75"/>
    </source>
</evidence>
<evidence type="ECO:0000255" key="2">
    <source>
        <dbReference type="PROSITE-ProRule" id="PRU00058"/>
    </source>
</evidence>
<evidence type="ECO:0000255" key="3">
    <source>
        <dbReference type="PROSITE-ProRule" id="PRU00126"/>
    </source>
</evidence>
<evidence type="ECO:0000255" key="4">
    <source>
        <dbReference type="PROSITE-ProRule" id="PRU01215"/>
    </source>
</evidence>
<feature type="chain" id="PRO_0000065710" description="E3 ubiquitin-protein transferase RMND5B">
    <location>
        <begin position="1"/>
        <end position="393"/>
    </location>
</feature>
<feature type="domain" description="LisH" evidence="3">
    <location>
        <begin position="116"/>
        <end position="148"/>
    </location>
</feature>
<feature type="domain" description="CTLH" evidence="2">
    <location>
        <begin position="155"/>
        <end position="212"/>
    </location>
</feature>
<feature type="zinc finger region" description="RING-Gid-type" evidence="4">
    <location>
        <begin position="338"/>
        <end position="379"/>
    </location>
</feature>
<feature type="modified residue" description="N-acetylmethionine" evidence="1">
    <location>
        <position position="1"/>
    </location>
</feature>
<protein>
    <recommendedName>
        <fullName>E3 ubiquitin-protein transferase RMND5B</fullName>
        <ecNumber evidence="1">2.3.2.27</ecNumber>
    </recommendedName>
    <alternativeName>
        <fullName>Protein RMD5 homolog B</fullName>
    </alternativeName>
</protein>
<accession>Q91YQ7</accession>
<organism>
    <name type="scientific">Mus musculus</name>
    <name type="common">Mouse</name>
    <dbReference type="NCBI Taxonomy" id="10090"/>
    <lineage>
        <taxon>Eukaryota</taxon>
        <taxon>Metazoa</taxon>
        <taxon>Chordata</taxon>
        <taxon>Craniata</taxon>
        <taxon>Vertebrata</taxon>
        <taxon>Euteleostomi</taxon>
        <taxon>Mammalia</taxon>
        <taxon>Eutheria</taxon>
        <taxon>Euarchontoglires</taxon>
        <taxon>Glires</taxon>
        <taxon>Rodentia</taxon>
        <taxon>Myomorpha</taxon>
        <taxon>Muroidea</taxon>
        <taxon>Muridae</taxon>
        <taxon>Murinae</taxon>
        <taxon>Mus</taxon>
        <taxon>Mus</taxon>
    </lineage>
</organism>
<gene>
    <name type="primary">Rmnd5b</name>
</gene>
<dbReference type="EC" id="2.3.2.27" evidence="1"/>
<dbReference type="EMBL" id="AK075599">
    <property type="protein sequence ID" value="BAC35848.1"/>
    <property type="molecule type" value="mRNA"/>
</dbReference>
<dbReference type="EMBL" id="BC016075">
    <property type="protein sequence ID" value="AAH16075.1"/>
    <property type="molecule type" value="mRNA"/>
</dbReference>
<dbReference type="CCDS" id="CCDS24656.1"/>
<dbReference type="RefSeq" id="NP_079622.1">
    <property type="nucleotide sequence ID" value="NM_025346.1"/>
</dbReference>
<dbReference type="SMR" id="Q91YQ7"/>
<dbReference type="FunCoup" id="Q91YQ7">
    <property type="interactions" value="2377"/>
</dbReference>
<dbReference type="STRING" id="10090.ENSMUSP00000001081"/>
<dbReference type="PhosphoSitePlus" id="Q91YQ7"/>
<dbReference type="PaxDb" id="10090-ENSMUSP00000001081"/>
<dbReference type="ProteomicsDB" id="300523"/>
<dbReference type="Pumba" id="Q91YQ7"/>
<dbReference type="Antibodypedia" id="46079">
    <property type="antibodies" value="93 antibodies from 22 providers"/>
</dbReference>
<dbReference type="DNASU" id="66089"/>
<dbReference type="Ensembl" id="ENSMUST00000001081.10">
    <property type="protein sequence ID" value="ENSMUSP00000001081.4"/>
    <property type="gene ID" value="ENSMUSG00000001054.10"/>
</dbReference>
<dbReference type="GeneID" id="66089"/>
<dbReference type="KEGG" id="mmu:66089"/>
<dbReference type="UCSC" id="uc007iud.1">
    <property type="organism name" value="mouse"/>
</dbReference>
<dbReference type="AGR" id="MGI:1913339"/>
<dbReference type="CTD" id="64777"/>
<dbReference type="MGI" id="MGI:1913339">
    <property type="gene designation" value="Rmnd5b"/>
</dbReference>
<dbReference type="VEuPathDB" id="HostDB:ENSMUSG00000001054"/>
<dbReference type="eggNOG" id="KOG2817">
    <property type="taxonomic scope" value="Eukaryota"/>
</dbReference>
<dbReference type="GeneTree" id="ENSGT00940000153203"/>
<dbReference type="HOGENOM" id="CLU_020227_3_1_1"/>
<dbReference type="InParanoid" id="Q91YQ7"/>
<dbReference type="OMA" id="FEATNND"/>
<dbReference type="OrthoDB" id="1933281at2759"/>
<dbReference type="PhylomeDB" id="Q91YQ7"/>
<dbReference type="TreeFam" id="TF315176"/>
<dbReference type="Reactome" id="R-MMU-9861718">
    <property type="pathway name" value="Regulation of pyruvate metabolism"/>
</dbReference>
<dbReference type="BioGRID-ORCS" id="66089">
    <property type="hits" value="3 hits in 78 CRISPR screens"/>
</dbReference>
<dbReference type="ChiTaRS" id="Rmnd5b">
    <property type="organism name" value="mouse"/>
</dbReference>
<dbReference type="PRO" id="PR:Q91YQ7"/>
<dbReference type="Proteomes" id="UP000000589">
    <property type="component" value="Chromosome 11"/>
</dbReference>
<dbReference type="RNAct" id="Q91YQ7">
    <property type="molecule type" value="protein"/>
</dbReference>
<dbReference type="Bgee" id="ENSMUSG00000001054">
    <property type="expression patterns" value="Expressed in granulocyte and 248 other cell types or tissues"/>
</dbReference>
<dbReference type="ExpressionAtlas" id="Q91YQ7">
    <property type="expression patterns" value="baseline and differential"/>
</dbReference>
<dbReference type="GO" id="GO:0005829">
    <property type="term" value="C:cytosol"/>
    <property type="evidence" value="ECO:0000250"/>
    <property type="project" value="UniProtKB"/>
</dbReference>
<dbReference type="GO" id="GO:0061630">
    <property type="term" value="F:ubiquitin protein ligase activity"/>
    <property type="evidence" value="ECO:0007669"/>
    <property type="project" value="InterPro"/>
</dbReference>
<dbReference type="GO" id="GO:0008270">
    <property type="term" value="F:zinc ion binding"/>
    <property type="evidence" value="ECO:0007669"/>
    <property type="project" value="UniProtKB-KW"/>
</dbReference>
<dbReference type="GO" id="GO:0043161">
    <property type="term" value="P:proteasome-mediated ubiquitin-dependent protein catabolic process"/>
    <property type="evidence" value="ECO:0007669"/>
    <property type="project" value="InterPro"/>
</dbReference>
<dbReference type="CDD" id="cd16795">
    <property type="entry name" value="dRING_RMD5B"/>
    <property type="match status" value="1"/>
</dbReference>
<dbReference type="FunFam" id="3.30.40.10:FF:000143">
    <property type="entry name" value="Regulator of gluconeogenesis Rmd5"/>
    <property type="match status" value="1"/>
</dbReference>
<dbReference type="InterPro" id="IPR013144">
    <property type="entry name" value="CRA_dom"/>
</dbReference>
<dbReference type="InterPro" id="IPR024964">
    <property type="entry name" value="CTLH/CRA"/>
</dbReference>
<dbReference type="InterPro" id="IPR006595">
    <property type="entry name" value="CTLH_C"/>
</dbReference>
<dbReference type="InterPro" id="IPR045098">
    <property type="entry name" value="Fyv10_fam"/>
</dbReference>
<dbReference type="InterPro" id="IPR006594">
    <property type="entry name" value="LisH"/>
</dbReference>
<dbReference type="InterPro" id="IPR037681">
    <property type="entry name" value="RMD5B_dRING"/>
</dbReference>
<dbReference type="InterPro" id="IPR044063">
    <property type="entry name" value="ZF_RING_GID"/>
</dbReference>
<dbReference type="InterPro" id="IPR027370">
    <property type="entry name" value="Znf-RING_euk"/>
</dbReference>
<dbReference type="PANTHER" id="PTHR12170:SF6">
    <property type="entry name" value="E3 UBIQUITIN-PROTEIN TRANSFERASE RMND5B"/>
    <property type="match status" value="1"/>
</dbReference>
<dbReference type="PANTHER" id="PTHR12170">
    <property type="entry name" value="MACROPHAGE ERYTHROBLAST ATTACHER-RELATED"/>
    <property type="match status" value="1"/>
</dbReference>
<dbReference type="Pfam" id="PF10607">
    <property type="entry name" value="CTLH"/>
    <property type="match status" value="1"/>
</dbReference>
<dbReference type="Pfam" id="PF13445">
    <property type="entry name" value="zf-RING_UBOX"/>
    <property type="match status" value="1"/>
</dbReference>
<dbReference type="SMART" id="SM00757">
    <property type="entry name" value="CRA"/>
    <property type="match status" value="1"/>
</dbReference>
<dbReference type="SMART" id="SM00668">
    <property type="entry name" value="CTLH"/>
    <property type="match status" value="1"/>
</dbReference>
<dbReference type="SMART" id="SM00667">
    <property type="entry name" value="LisH"/>
    <property type="match status" value="1"/>
</dbReference>
<dbReference type="SUPFAM" id="SSF57850">
    <property type="entry name" value="RING/U-box"/>
    <property type="match status" value="1"/>
</dbReference>
<dbReference type="PROSITE" id="PS50897">
    <property type="entry name" value="CTLH"/>
    <property type="match status" value="1"/>
</dbReference>
<dbReference type="PROSITE" id="PS50896">
    <property type="entry name" value="LISH"/>
    <property type="match status" value="1"/>
</dbReference>
<dbReference type="PROSITE" id="PS51867">
    <property type="entry name" value="ZF_RING_GID"/>
    <property type="match status" value="1"/>
</dbReference>
<reference key="1">
    <citation type="journal article" date="2005" name="Science">
        <title>The transcriptional landscape of the mammalian genome.</title>
        <authorList>
            <person name="Carninci P."/>
            <person name="Kasukawa T."/>
            <person name="Katayama S."/>
            <person name="Gough J."/>
            <person name="Frith M.C."/>
            <person name="Maeda N."/>
            <person name="Oyama R."/>
            <person name="Ravasi T."/>
            <person name="Lenhard B."/>
            <person name="Wells C."/>
            <person name="Kodzius R."/>
            <person name="Shimokawa K."/>
            <person name="Bajic V.B."/>
            <person name="Brenner S.E."/>
            <person name="Batalov S."/>
            <person name="Forrest A.R."/>
            <person name="Zavolan M."/>
            <person name="Davis M.J."/>
            <person name="Wilming L.G."/>
            <person name="Aidinis V."/>
            <person name="Allen J.E."/>
            <person name="Ambesi-Impiombato A."/>
            <person name="Apweiler R."/>
            <person name="Aturaliya R.N."/>
            <person name="Bailey T.L."/>
            <person name="Bansal M."/>
            <person name="Baxter L."/>
            <person name="Beisel K.W."/>
            <person name="Bersano T."/>
            <person name="Bono H."/>
            <person name="Chalk A.M."/>
            <person name="Chiu K.P."/>
            <person name="Choudhary V."/>
            <person name="Christoffels A."/>
            <person name="Clutterbuck D.R."/>
            <person name="Crowe M.L."/>
            <person name="Dalla E."/>
            <person name="Dalrymple B.P."/>
            <person name="de Bono B."/>
            <person name="Della Gatta G."/>
            <person name="di Bernardo D."/>
            <person name="Down T."/>
            <person name="Engstrom P."/>
            <person name="Fagiolini M."/>
            <person name="Faulkner G."/>
            <person name="Fletcher C.F."/>
            <person name="Fukushima T."/>
            <person name="Furuno M."/>
            <person name="Futaki S."/>
            <person name="Gariboldi M."/>
            <person name="Georgii-Hemming P."/>
            <person name="Gingeras T.R."/>
            <person name="Gojobori T."/>
            <person name="Green R.E."/>
            <person name="Gustincich S."/>
            <person name="Harbers M."/>
            <person name="Hayashi Y."/>
            <person name="Hensch T.K."/>
            <person name="Hirokawa N."/>
            <person name="Hill D."/>
            <person name="Huminiecki L."/>
            <person name="Iacono M."/>
            <person name="Ikeo K."/>
            <person name="Iwama A."/>
            <person name="Ishikawa T."/>
            <person name="Jakt M."/>
            <person name="Kanapin A."/>
            <person name="Katoh M."/>
            <person name="Kawasawa Y."/>
            <person name="Kelso J."/>
            <person name="Kitamura H."/>
            <person name="Kitano H."/>
            <person name="Kollias G."/>
            <person name="Krishnan S.P."/>
            <person name="Kruger A."/>
            <person name="Kummerfeld S.K."/>
            <person name="Kurochkin I.V."/>
            <person name="Lareau L.F."/>
            <person name="Lazarevic D."/>
            <person name="Lipovich L."/>
            <person name="Liu J."/>
            <person name="Liuni S."/>
            <person name="McWilliam S."/>
            <person name="Madan Babu M."/>
            <person name="Madera M."/>
            <person name="Marchionni L."/>
            <person name="Matsuda H."/>
            <person name="Matsuzawa S."/>
            <person name="Miki H."/>
            <person name="Mignone F."/>
            <person name="Miyake S."/>
            <person name="Morris K."/>
            <person name="Mottagui-Tabar S."/>
            <person name="Mulder N."/>
            <person name="Nakano N."/>
            <person name="Nakauchi H."/>
            <person name="Ng P."/>
            <person name="Nilsson R."/>
            <person name="Nishiguchi S."/>
            <person name="Nishikawa S."/>
            <person name="Nori F."/>
            <person name="Ohara O."/>
            <person name="Okazaki Y."/>
            <person name="Orlando V."/>
            <person name="Pang K.C."/>
            <person name="Pavan W.J."/>
            <person name="Pavesi G."/>
            <person name="Pesole G."/>
            <person name="Petrovsky N."/>
            <person name="Piazza S."/>
            <person name="Reed J."/>
            <person name="Reid J.F."/>
            <person name="Ring B.Z."/>
            <person name="Ringwald M."/>
            <person name="Rost B."/>
            <person name="Ruan Y."/>
            <person name="Salzberg S.L."/>
            <person name="Sandelin A."/>
            <person name="Schneider C."/>
            <person name="Schoenbach C."/>
            <person name="Sekiguchi K."/>
            <person name="Semple C.A."/>
            <person name="Seno S."/>
            <person name="Sessa L."/>
            <person name="Sheng Y."/>
            <person name="Shibata Y."/>
            <person name="Shimada H."/>
            <person name="Shimada K."/>
            <person name="Silva D."/>
            <person name="Sinclair B."/>
            <person name="Sperling S."/>
            <person name="Stupka E."/>
            <person name="Sugiura K."/>
            <person name="Sultana R."/>
            <person name="Takenaka Y."/>
            <person name="Taki K."/>
            <person name="Tammoja K."/>
            <person name="Tan S.L."/>
            <person name="Tang S."/>
            <person name="Taylor M.S."/>
            <person name="Tegner J."/>
            <person name="Teichmann S.A."/>
            <person name="Ueda H.R."/>
            <person name="van Nimwegen E."/>
            <person name="Verardo R."/>
            <person name="Wei C.L."/>
            <person name="Yagi K."/>
            <person name="Yamanishi H."/>
            <person name="Zabarovsky E."/>
            <person name="Zhu S."/>
            <person name="Zimmer A."/>
            <person name="Hide W."/>
            <person name="Bult C."/>
            <person name="Grimmond S.M."/>
            <person name="Teasdale R.D."/>
            <person name="Liu E.T."/>
            <person name="Brusic V."/>
            <person name="Quackenbush J."/>
            <person name="Wahlestedt C."/>
            <person name="Mattick J.S."/>
            <person name="Hume D.A."/>
            <person name="Kai C."/>
            <person name="Sasaki D."/>
            <person name="Tomaru Y."/>
            <person name="Fukuda S."/>
            <person name="Kanamori-Katayama M."/>
            <person name="Suzuki M."/>
            <person name="Aoki J."/>
            <person name="Arakawa T."/>
            <person name="Iida J."/>
            <person name="Imamura K."/>
            <person name="Itoh M."/>
            <person name="Kato T."/>
            <person name="Kawaji H."/>
            <person name="Kawagashira N."/>
            <person name="Kawashima T."/>
            <person name="Kojima M."/>
            <person name="Kondo S."/>
            <person name="Konno H."/>
            <person name="Nakano K."/>
            <person name="Ninomiya N."/>
            <person name="Nishio T."/>
            <person name="Okada M."/>
            <person name="Plessy C."/>
            <person name="Shibata K."/>
            <person name="Shiraki T."/>
            <person name="Suzuki S."/>
            <person name="Tagami M."/>
            <person name="Waki K."/>
            <person name="Watahiki A."/>
            <person name="Okamura-Oho Y."/>
            <person name="Suzuki H."/>
            <person name="Kawai J."/>
            <person name="Hayashizaki Y."/>
        </authorList>
    </citation>
    <scope>NUCLEOTIDE SEQUENCE [LARGE SCALE MRNA]</scope>
    <source>
        <strain>C57BL/6J</strain>
        <tissue>Kidney</tissue>
    </source>
</reference>
<reference key="2">
    <citation type="journal article" date="2004" name="Genome Res.">
        <title>The status, quality, and expansion of the NIH full-length cDNA project: the Mammalian Gene Collection (MGC).</title>
        <authorList>
            <consortium name="The MGC Project Team"/>
        </authorList>
    </citation>
    <scope>NUCLEOTIDE SEQUENCE [LARGE SCALE MRNA]</scope>
</reference>
<name>RMD5B_MOUSE</name>